<accession>B0UVH6</accession>
<dbReference type="EC" id="6.1.1.16" evidence="1"/>
<dbReference type="EMBL" id="CP000947">
    <property type="protein sequence ID" value="ACA30873.1"/>
    <property type="molecule type" value="Genomic_DNA"/>
</dbReference>
<dbReference type="RefSeq" id="WP_012340332.1">
    <property type="nucleotide sequence ID" value="NC_010519.1"/>
</dbReference>
<dbReference type="SMR" id="B0UVH6"/>
<dbReference type="STRING" id="228400.HSM_0115"/>
<dbReference type="GeneID" id="31486390"/>
<dbReference type="KEGG" id="hsm:HSM_0115"/>
<dbReference type="HOGENOM" id="CLU_013528_0_1_6"/>
<dbReference type="GO" id="GO:0005829">
    <property type="term" value="C:cytosol"/>
    <property type="evidence" value="ECO:0007669"/>
    <property type="project" value="TreeGrafter"/>
</dbReference>
<dbReference type="GO" id="GO:0005524">
    <property type="term" value="F:ATP binding"/>
    <property type="evidence" value="ECO:0007669"/>
    <property type="project" value="UniProtKB-UniRule"/>
</dbReference>
<dbReference type="GO" id="GO:0004817">
    <property type="term" value="F:cysteine-tRNA ligase activity"/>
    <property type="evidence" value="ECO:0007669"/>
    <property type="project" value="UniProtKB-UniRule"/>
</dbReference>
<dbReference type="GO" id="GO:0008270">
    <property type="term" value="F:zinc ion binding"/>
    <property type="evidence" value="ECO:0007669"/>
    <property type="project" value="UniProtKB-UniRule"/>
</dbReference>
<dbReference type="GO" id="GO:0006423">
    <property type="term" value="P:cysteinyl-tRNA aminoacylation"/>
    <property type="evidence" value="ECO:0007669"/>
    <property type="project" value="UniProtKB-UniRule"/>
</dbReference>
<dbReference type="CDD" id="cd07963">
    <property type="entry name" value="Anticodon_Ia_Cys"/>
    <property type="match status" value="1"/>
</dbReference>
<dbReference type="CDD" id="cd00672">
    <property type="entry name" value="CysRS_core"/>
    <property type="match status" value="1"/>
</dbReference>
<dbReference type="FunFam" id="1.20.120.1910:FF:000001">
    <property type="entry name" value="Cysteine--tRNA ligase"/>
    <property type="match status" value="1"/>
</dbReference>
<dbReference type="FunFam" id="3.40.50.620:FF:000009">
    <property type="entry name" value="Cysteine--tRNA ligase"/>
    <property type="match status" value="1"/>
</dbReference>
<dbReference type="Gene3D" id="1.20.120.1910">
    <property type="entry name" value="Cysteine-tRNA ligase, C-terminal anti-codon recognition domain"/>
    <property type="match status" value="1"/>
</dbReference>
<dbReference type="Gene3D" id="3.40.50.620">
    <property type="entry name" value="HUPs"/>
    <property type="match status" value="1"/>
</dbReference>
<dbReference type="HAMAP" id="MF_00041">
    <property type="entry name" value="Cys_tRNA_synth"/>
    <property type="match status" value="1"/>
</dbReference>
<dbReference type="InterPro" id="IPR015803">
    <property type="entry name" value="Cys-tRNA-ligase"/>
</dbReference>
<dbReference type="InterPro" id="IPR015273">
    <property type="entry name" value="Cys-tRNA-synt_Ia_DALR"/>
</dbReference>
<dbReference type="InterPro" id="IPR024909">
    <property type="entry name" value="Cys-tRNA/MSH_ligase"/>
</dbReference>
<dbReference type="InterPro" id="IPR056411">
    <property type="entry name" value="CysS_C"/>
</dbReference>
<dbReference type="InterPro" id="IPR014729">
    <property type="entry name" value="Rossmann-like_a/b/a_fold"/>
</dbReference>
<dbReference type="InterPro" id="IPR032678">
    <property type="entry name" value="tRNA-synt_1_cat_dom"/>
</dbReference>
<dbReference type="InterPro" id="IPR009080">
    <property type="entry name" value="tRNAsynth_Ia_anticodon-bd"/>
</dbReference>
<dbReference type="NCBIfam" id="TIGR00435">
    <property type="entry name" value="cysS"/>
    <property type="match status" value="1"/>
</dbReference>
<dbReference type="PANTHER" id="PTHR10890:SF3">
    <property type="entry name" value="CYSTEINE--TRNA LIGASE, CYTOPLASMIC"/>
    <property type="match status" value="1"/>
</dbReference>
<dbReference type="PANTHER" id="PTHR10890">
    <property type="entry name" value="CYSTEINYL-TRNA SYNTHETASE"/>
    <property type="match status" value="1"/>
</dbReference>
<dbReference type="Pfam" id="PF23493">
    <property type="entry name" value="CysS_C"/>
    <property type="match status" value="1"/>
</dbReference>
<dbReference type="Pfam" id="PF09190">
    <property type="entry name" value="DALR_2"/>
    <property type="match status" value="1"/>
</dbReference>
<dbReference type="Pfam" id="PF01406">
    <property type="entry name" value="tRNA-synt_1e"/>
    <property type="match status" value="1"/>
</dbReference>
<dbReference type="PRINTS" id="PR00983">
    <property type="entry name" value="TRNASYNTHCYS"/>
</dbReference>
<dbReference type="SMART" id="SM00840">
    <property type="entry name" value="DALR_2"/>
    <property type="match status" value="1"/>
</dbReference>
<dbReference type="SUPFAM" id="SSF47323">
    <property type="entry name" value="Anticodon-binding domain of a subclass of class I aminoacyl-tRNA synthetases"/>
    <property type="match status" value="1"/>
</dbReference>
<dbReference type="SUPFAM" id="SSF52374">
    <property type="entry name" value="Nucleotidylyl transferase"/>
    <property type="match status" value="1"/>
</dbReference>
<evidence type="ECO:0000255" key="1">
    <source>
        <dbReference type="HAMAP-Rule" id="MF_00041"/>
    </source>
</evidence>
<gene>
    <name evidence="1" type="primary">cysS</name>
    <name type="ordered locus">HSM_0115</name>
</gene>
<feature type="chain" id="PRO_1000074615" description="Cysteine--tRNA ligase">
    <location>
        <begin position="1"/>
        <end position="459"/>
    </location>
</feature>
<feature type="short sequence motif" description="'HIGH' region">
    <location>
        <begin position="30"/>
        <end position="40"/>
    </location>
</feature>
<feature type="short sequence motif" description="'KMSKS' region">
    <location>
        <begin position="266"/>
        <end position="270"/>
    </location>
</feature>
<feature type="binding site" evidence="1">
    <location>
        <position position="28"/>
    </location>
    <ligand>
        <name>Zn(2+)</name>
        <dbReference type="ChEBI" id="CHEBI:29105"/>
    </ligand>
</feature>
<feature type="binding site" evidence="1">
    <location>
        <position position="209"/>
    </location>
    <ligand>
        <name>Zn(2+)</name>
        <dbReference type="ChEBI" id="CHEBI:29105"/>
    </ligand>
</feature>
<feature type="binding site" evidence="1">
    <location>
        <position position="234"/>
    </location>
    <ligand>
        <name>Zn(2+)</name>
        <dbReference type="ChEBI" id="CHEBI:29105"/>
    </ligand>
</feature>
<feature type="binding site" evidence="1">
    <location>
        <position position="238"/>
    </location>
    <ligand>
        <name>Zn(2+)</name>
        <dbReference type="ChEBI" id="CHEBI:29105"/>
    </ligand>
</feature>
<feature type="binding site" evidence="1">
    <location>
        <position position="269"/>
    </location>
    <ligand>
        <name>ATP</name>
        <dbReference type="ChEBI" id="CHEBI:30616"/>
    </ligand>
</feature>
<comment type="catalytic activity">
    <reaction evidence="1">
        <text>tRNA(Cys) + L-cysteine + ATP = L-cysteinyl-tRNA(Cys) + AMP + diphosphate</text>
        <dbReference type="Rhea" id="RHEA:17773"/>
        <dbReference type="Rhea" id="RHEA-COMP:9661"/>
        <dbReference type="Rhea" id="RHEA-COMP:9679"/>
        <dbReference type="ChEBI" id="CHEBI:30616"/>
        <dbReference type="ChEBI" id="CHEBI:33019"/>
        <dbReference type="ChEBI" id="CHEBI:35235"/>
        <dbReference type="ChEBI" id="CHEBI:78442"/>
        <dbReference type="ChEBI" id="CHEBI:78517"/>
        <dbReference type="ChEBI" id="CHEBI:456215"/>
        <dbReference type="EC" id="6.1.1.16"/>
    </reaction>
</comment>
<comment type="cofactor">
    <cofactor evidence="1">
        <name>Zn(2+)</name>
        <dbReference type="ChEBI" id="CHEBI:29105"/>
    </cofactor>
    <text evidence="1">Binds 1 zinc ion per subunit.</text>
</comment>
<comment type="subunit">
    <text evidence="1">Monomer.</text>
</comment>
<comment type="subcellular location">
    <subcellularLocation>
        <location evidence="1">Cytoplasm</location>
    </subcellularLocation>
</comment>
<comment type="similarity">
    <text evidence="1">Belongs to the class-I aminoacyl-tRNA synthetase family.</text>
</comment>
<protein>
    <recommendedName>
        <fullName evidence="1">Cysteine--tRNA ligase</fullName>
        <ecNumber evidence="1">6.1.1.16</ecNumber>
    </recommendedName>
    <alternativeName>
        <fullName evidence="1">Cysteinyl-tRNA synthetase</fullName>
        <shortName evidence="1">CysRS</shortName>
    </alternativeName>
</protein>
<reference key="1">
    <citation type="submission" date="2008-02" db="EMBL/GenBank/DDBJ databases">
        <title>Complete sequence of Haemophilus somnus 2336.</title>
        <authorList>
            <consortium name="US DOE Joint Genome Institute"/>
            <person name="Siddaramappa S."/>
            <person name="Duncan A.J."/>
            <person name="Challacombe J.F."/>
            <person name="Rainey D."/>
            <person name="Gillaspy A.F."/>
            <person name="Carson M."/>
            <person name="Gipson J."/>
            <person name="Gipson M."/>
            <person name="Bruce D."/>
            <person name="Detter J.C."/>
            <person name="Han C.S."/>
            <person name="Land M."/>
            <person name="Tapia R."/>
            <person name="Thompson L.S."/>
            <person name="Orvis J."/>
            <person name="Zaitshik J."/>
            <person name="Barnes G."/>
            <person name="Brettin T.S."/>
            <person name="Dyer D.W."/>
            <person name="Inzana T.J."/>
        </authorList>
    </citation>
    <scope>NUCLEOTIDE SEQUENCE [LARGE SCALE GENOMIC DNA]</scope>
    <source>
        <strain>2336</strain>
    </source>
</reference>
<organism>
    <name type="scientific">Histophilus somni (strain 2336)</name>
    <name type="common">Haemophilus somnus</name>
    <dbReference type="NCBI Taxonomy" id="228400"/>
    <lineage>
        <taxon>Bacteria</taxon>
        <taxon>Pseudomonadati</taxon>
        <taxon>Pseudomonadota</taxon>
        <taxon>Gammaproteobacteria</taxon>
        <taxon>Pasteurellales</taxon>
        <taxon>Pasteurellaceae</taxon>
        <taxon>Histophilus</taxon>
    </lineage>
</organism>
<name>SYC_HISS2</name>
<proteinExistence type="inferred from homology"/>
<sequence length="459" mass="52517">MLKIFNTLTREKEVFKPISENKVGMYVCGVTVYDLCHIGHGRTFVCFDVIARYLRYLGYELTYVRNITDVDDKIIRRALENKETCEQLVDRMVVEMYKDFDALNVLRPDFEPRATHHIAEIIALVEKLIARGHAYVADNGDVMFDVESFKEYGKLSRQDLTQLQAGARVEISEIKKNPMDFVLWKMSKENEPSWNSPWGAGRPGWHIECSAMNCKHLGEHFDIHGGGADLMFPHHENEIAQSCCAHGNRYVNYWIHSGMIMVDKEKMSKSLGNFFTIRDVLNHYDAESVRYFLLTAHYRSQLNYSEENLDLAHGALERLYTALRGTDKSAVSFGGENFIAQFTEAMNDDFNTPNAISVLFEMAREINRLKNEDKLLADGLAARLRELASILGLLDQDPEDFLQAGSDDAEIAKIEELIKQRNDARQAKDWARADAARNELTTMGVILEDSSNGTMWRKM</sequence>
<keyword id="KW-0030">Aminoacyl-tRNA synthetase</keyword>
<keyword id="KW-0067">ATP-binding</keyword>
<keyword id="KW-0963">Cytoplasm</keyword>
<keyword id="KW-0436">Ligase</keyword>
<keyword id="KW-0479">Metal-binding</keyword>
<keyword id="KW-0547">Nucleotide-binding</keyword>
<keyword id="KW-0648">Protein biosynthesis</keyword>
<keyword id="KW-0862">Zinc</keyword>